<organism>
    <name type="scientific">Capsicum annuum</name>
    <name type="common">Capsicum pepper</name>
    <dbReference type="NCBI Taxonomy" id="4072"/>
    <lineage>
        <taxon>Eukaryota</taxon>
        <taxon>Viridiplantae</taxon>
        <taxon>Streptophyta</taxon>
        <taxon>Embryophyta</taxon>
        <taxon>Tracheophyta</taxon>
        <taxon>Spermatophyta</taxon>
        <taxon>Magnoliopsida</taxon>
        <taxon>eudicotyledons</taxon>
        <taxon>Gunneridae</taxon>
        <taxon>Pentapetalae</taxon>
        <taxon>asterids</taxon>
        <taxon>lamiids</taxon>
        <taxon>Solanales</taxon>
        <taxon>Solanaceae</taxon>
        <taxon>Solanoideae</taxon>
        <taxon>Capsiceae</taxon>
        <taxon>Capsicum</taxon>
    </lineage>
</organism>
<proteinExistence type="evidence at transcript level"/>
<sequence length="374" mass="39978">MASIINNPFTSLCCNTNKCEPNRICSLRSQQSLVFDNVNRKVGFPSVVCKAVSVQTKSPTEIEGLNIAEDVTQLIGNTPMVYLNTIVKGCVANIAAKLEIMEPCCSVKDRIGFSMISDAEEKGLISPGKTVLVEPTSGNTGIGLAFIAASRGYKLILTMPASMSLERRVILKAFGAELVLTDPAKGMKGAVSKAEEILNNTPDAYILQQFDNPANPKIHYETTGPEIWEDTKGKIDILVAGIGTGGTISGTGRYLKEKNPNIKIIGVEPTESNVLSGGKPGFIPGNLDQDVMDEVIEISSDEAVETAKQLALQEGLLVGISSGAAALAAIQVAKRPENAGKLIAVVFPSFGERYLSSILFQSIREECEKMKPEL</sequence>
<accession>P31300</accession>
<dbReference type="EC" id="2.5.1.47"/>
<dbReference type="EMBL" id="X64874">
    <property type="protein sequence ID" value="CAA46086.1"/>
    <property type="molecule type" value="mRNA"/>
</dbReference>
<dbReference type="PIR" id="A43407">
    <property type="entry name" value="A43407"/>
</dbReference>
<dbReference type="RefSeq" id="XP_047267540.1">
    <property type="nucleotide sequence ID" value="XM_047411584.1"/>
</dbReference>
<dbReference type="SMR" id="P31300"/>
<dbReference type="EnsemblPlants" id="PHT95606">
    <property type="protein sequence ID" value="PHT95606"/>
    <property type="gene ID" value="T459_03488"/>
</dbReference>
<dbReference type="GeneID" id="107855629"/>
<dbReference type="Gramene" id="PHT95606">
    <property type="protein sequence ID" value="PHT95606"/>
    <property type="gene ID" value="T459_03488"/>
</dbReference>
<dbReference type="OMA" id="VVTVFWD"/>
<dbReference type="UniPathway" id="UPA00136">
    <property type="reaction ID" value="UER00200"/>
</dbReference>
<dbReference type="GO" id="GO:0009570">
    <property type="term" value="C:chloroplast stroma"/>
    <property type="evidence" value="ECO:0007669"/>
    <property type="project" value="UniProtKB-SubCell"/>
</dbReference>
<dbReference type="GO" id="GO:0009509">
    <property type="term" value="C:chromoplast"/>
    <property type="evidence" value="ECO:0007669"/>
    <property type="project" value="UniProtKB-SubCell"/>
</dbReference>
<dbReference type="GO" id="GO:0004124">
    <property type="term" value="F:cysteine synthase activity"/>
    <property type="evidence" value="ECO:0007669"/>
    <property type="project" value="UniProtKB-EC"/>
</dbReference>
<dbReference type="GO" id="GO:0006535">
    <property type="term" value="P:cysteine biosynthetic process from serine"/>
    <property type="evidence" value="ECO:0007669"/>
    <property type="project" value="InterPro"/>
</dbReference>
<dbReference type="CDD" id="cd01561">
    <property type="entry name" value="CBS_like"/>
    <property type="match status" value="1"/>
</dbReference>
<dbReference type="FunFam" id="3.40.50.1100:FF:000006">
    <property type="entry name" value="Cysteine synthase"/>
    <property type="match status" value="1"/>
</dbReference>
<dbReference type="FunFam" id="3.40.50.1100:FF:000130">
    <property type="entry name" value="Cysteine synthase"/>
    <property type="match status" value="1"/>
</dbReference>
<dbReference type="Gene3D" id="3.40.50.1100">
    <property type="match status" value="2"/>
</dbReference>
<dbReference type="InterPro" id="IPR005856">
    <property type="entry name" value="Cys_synth"/>
</dbReference>
<dbReference type="InterPro" id="IPR050214">
    <property type="entry name" value="Cys_Synth/Cystath_Beta-Synth"/>
</dbReference>
<dbReference type="InterPro" id="IPR005859">
    <property type="entry name" value="CysK"/>
</dbReference>
<dbReference type="InterPro" id="IPR001216">
    <property type="entry name" value="P-phosphate_BS"/>
</dbReference>
<dbReference type="InterPro" id="IPR001926">
    <property type="entry name" value="TrpB-like_PALP"/>
</dbReference>
<dbReference type="InterPro" id="IPR036052">
    <property type="entry name" value="TrpB-like_PALP_sf"/>
</dbReference>
<dbReference type="NCBIfam" id="TIGR01139">
    <property type="entry name" value="cysK"/>
    <property type="match status" value="1"/>
</dbReference>
<dbReference type="NCBIfam" id="TIGR01136">
    <property type="entry name" value="cysKM"/>
    <property type="match status" value="1"/>
</dbReference>
<dbReference type="PANTHER" id="PTHR10314">
    <property type="entry name" value="CYSTATHIONINE BETA-SYNTHASE"/>
    <property type="match status" value="1"/>
</dbReference>
<dbReference type="Pfam" id="PF00291">
    <property type="entry name" value="PALP"/>
    <property type="match status" value="1"/>
</dbReference>
<dbReference type="SUPFAM" id="SSF53686">
    <property type="entry name" value="Tryptophan synthase beta subunit-like PLP-dependent enzymes"/>
    <property type="match status" value="1"/>
</dbReference>
<dbReference type="PROSITE" id="PS00901">
    <property type="entry name" value="CYS_SYNTHASE"/>
    <property type="match status" value="1"/>
</dbReference>
<name>CYSKP_CAPAN</name>
<protein>
    <recommendedName>
        <fullName>Cysteine synthase, chloroplastic/chromoplastic</fullName>
        <ecNumber>2.5.1.47</ecNumber>
    </recommendedName>
    <alternativeName>
        <fullName>CSase B</fullName>
        <shortName>CS-B</shortName>
    </alternativeName>
    <alternativeName>
        <fullName>O-acetylserine (thiol)-lyase</fullName>
    </alternativeName>
    <alternativeName>
        <fullName>O-acetylserine sulfhydrylase</fullName>
    </alternativeName>
    <alternativeName>
        <fullName>OAS-TL B</fullName>
    </alternativeName>
</protein>
<comment type="catalytic activity">
    <reaction>
        <text>O-acetyl-L-serine + hydrogen sulfide = L-cysteine + acetate</text>
        <dbReference type="Rhea" id="RHEA:14829"/>
        <dbReference type="ChEBI" id="CHEBI:29919"/>
        <dbReference type="ChEBI" id="CHEBI:30089"/>
        <dbReference type="ChEBI" id="CHEBI:35235"/>
        <dbReference type="ChEBI" id="CHEBI:58340"/>
        <dbReference type="EC" id="2.5.1.47"/>
    </reaction>
</comment>
<comment type="cofactor">
    <cofactor>
        <name>pyridoxal 5'-phosphate</name>
        <dbReference type="ChEBI" id="CHEBI:597326"/>
    </cofactor>
</comment>
<comment type="pathway">
    <text>Amino-acid biosynthesis; L-cysteine biosynthesis; L-cysteine from L-serine: step 2/2.</text>
</comment>
<comment type="subunit">
    <text>Homodimer.</text>
</comment>
<comment type="subcellular location">
    <subcellularLocation>
        <location>Plastid</location>
        <location>Chloroplast stroma</location>
    </subcellularLocation>
    <subcellularLocation>
        <location>Plastid</location>
        <location>Chromoplast</location>
    </subcellularLocation>
</comment>
<comment type="similarity">
    <text evidence="2">Belongs to the cysteine synthase/cystathionine beta-synthase family.</text>
</comment>
<reference key="1">
    <citation type="journal article" date="1992" name="J. Biol. Chem.">
        <title>Cysteine synthase from Capsicum annuum chromoplasts. Characterization and cDNA cloning of an up-regulated enzyme during fruit development.</title>
        <authorList>
            <person name="Roemer S."/>
            <person name="D'Harlingue A."/>
            <person name="Camara B."/>
            <person name="Schantz R."/>
            <person name="Kuntz M."/>
        </authorList>
    </citation>
    <scope>NUCLEOTIDE SEQUENCE [MRNA]</scope>
    <source>
        <strain>cv. Lamuyo</strain>
        <tissue>Fruit</tissue>
    </source>
</reference>
<evidence type="ECO:0000250" key="1"/>
<evidence type="ECO:0000305" key="2"/>
<feature type="transit peptide" description="Chloroplast and chromoplast" evidence="1">
    <location>
        <begin position="1"/>
        <end position="50"/>
    </location>
</feature>
<feature type="chain" id="PRO_0000006350" description="Cysteine synthase, chloroplastic/chromoplastic">
    <location>
        <begin position="51"/>
        <end position="374"/>
    </location>
</feature>
<feature type="binding site" evidence="1">
    <location>
        <position position="139"/>
    </location>
    <ligand>
        <name>pyridoxal 5'-phosphate</name>
        <dbReference type="ChEBI" id="CHEBI:597326"/>
    </ligand>
</feature>
<feature type="binding site" evidence="1">
    <location>
        <begin position="243"/>
        <end position="247"/>
    </location>
    <ligand>
        <name>pyridoxal 5'-phosphate</name>
        <dbReference type="ChEBI" id="CHEBI:597326"/>
    </ligand>
</feature>
<feature type="binding site" evidence="1">
    <location>
        <position position="321"/>
    </location>
    <ligand>
        <name>pyridoxal 5'-phosphate</name>
        <dbReference type="ChEBI" id="CHEBI:597326"/>
    </ligand>
</feature>
<feature type="modified residue" description="N6-(pyridoxal phosphate)lysine" evidence="1">
    <location>
        <position position="108"/>
    </location>
</feature>
<keyword id="KW-0028">Amino-acid biosynthesis</keyword>
<keyword id="KW-0150">Chloroplast</keyword>
<keyword id="KW-0957">Chromoplast</keyword>
<keyword id="KW-0198">Cysteine biosynthesis</keyword>
<keyword id="KW-0934">Plastid</keyword>
<keyword id="KW-0663">Pyridoxal phosphate</keyword>
<keyword id="KW-0808">Transferase</keyword>
<keyword id="KW-0809">Transit peptide</keyword>